<organism>
    <name type="scientific">Salmonella enteritidis PT4 (strain P125109)</name>
    <dbReference type="NCBI Taxonomy" id="550537"/>
    <lineage>
        <taxon>Bacteria</taxon>
        <taxon>Pseudomonadati</taxon>
        <taxon>Pseudomonadota</taxon>
        <taxon>Gammaproteobacteria</taxon>
        <taxon>Enterobacterales</taxon>
        <taxon>Enterobacteriaceae</taxon>
        <taxon>Salmonella</taxon>
    </lineage>
</organism>
<proteinExistence type="inferred from homology"/>
<protein>
    <recommendedName>
        <fullName evidence="1">Small ribosomal subunit protein bS6</fullName>
    </recommendedName>
    <alternativeName>
        <fullName evidence="3">30S ribosomal protein S6</fullName>
    </alternativeName>
</protein>
<dbReference type="EMBL" id="AM933172">
    <property type="protein sequence ID" value="CAR35717.1"/>
    <property type="molecule type" value="Genomic_DNA"/>
</dbReference>
<dbReference type="RefSeq" id="WP_001216673.1">
    <property type="nucleotide sequence ID" value="NC_011294.1"/>
</dbReference>
<dbReference type="SMR" id="B5R0R8"/>
<dbReference type="GeneID" id="92804768"/>
<dbReference type="KEGG" id="set:SEN4157"/>
<dbReference type="HOGENOM" id="CLU_113441_6_1_6"/>
<dbReference type="Proteomes" id="UP000000613">
    <property type="component" value="Chromosome"/>
</dbReference>
<dbReference type="GO" id="GO:0022627">
    <property type="term" value="C:cytosolic small ribosomal subunit"/>
    <property type="evidence" value="ECO:0007669"/>
    <property type="project" value="TreeGrafter"/>
</dbReference>
<dbReference type="GO" id="GO:0070181">
    <property type="term" value="F:small ribosomal subunit rRNA binding"/>
    <property type="evidence" value="ECO:0007669"/>
    <property type="project" value="TreeGrafter"/>
</dbReference>
<dbReference type="GO" id="GO:0003735">
    <property type="term" value="F:structural constituent of ribosome"/>
    <property type="evidence" value="ECO:0007669"/>
    <property type="project" value="InterPro"/>
</dbReference>
<dbReference type="GO" id="GO:0006412">
    <property type="term" value="P:translation"/>
    <property type="evidence" value="ECO:0007669"/>
    <property type="project" value="UniProtKB-UniRule"/>
</dbReference>
<dbReference type="CDD" id="cd00473">
    <property type="entry name" value="bS6"/>
    <property type="match status" value="1"/>
</dbReference>
<dbReference type="FunFam" id="3.30.70.60:FF:000003">
    <property type="entry name" value="30S ribosomal protein S6"/>
    <property type="match status" value="1"/>
</dbReference>
<dbReference type="Gene3D" id="3.30.70.60">
    <property type="match status" value="1"/>
</dbReference>
<dbReference type="HAMAP" id="MF_00360">
    <property type="entry name" value="Ribosomal_bS6"/>
    <property type="match status" value="1"/>
</dbReference>
<dbReference type="InterPro" id="IPR000529">
    <property type="entry name" value="Ribosomal_bS6"/>
</dbReference>
<dbReference type="InterPro" id="IPR020815">
    <property type="entry name" value="Ribosomal_bS6_CS"/>
</dbReference>
<dbReference type="InterPro" id="IPR035980">
    <property type="entry name" value="Ribosomal_bS6_sf"/>
</dbReference>
<dbReference type="InterPro" id="IPR020814">
    <property type="entry name" value="Ribosomal_S6_plastid/chlpt"/>
</dbReference>
<dbReference type="InterPro" id="IPR014717">
    <property type="entry name" value="Transl_elong_EF1B/ribsomal_bS6"/>
</dbReference>
<dbReference type="NCBIfam" id="TIGR00166">
    <property type="entry name" value="S6"/>
    <property type="match status" value="1"/>
</dbReference>
<dbReference type="PANTHER" id="PTHR21011">
    <property type="entry name" value="MITOCHONDRIAL 28S RIBOSOMAL PROTEIN S6"/>
    <property type="match status" value="1"/>
</dbReference>
<dbReference type="PANTHER" id="PTHR21011:SF1">
    <property type="entry name" value="SMALL RIBOSOMAL SUBUNIT PROTEIN BS6M"/>
    <property type="match status" value="1"/>
</dbReference>
<dbReference type="Pfam" id="PF01250">
    <property type="entry name" value="Ribosomal_S6"/>
    <property type="match status" value="1"/>
</dbReference>
<dbReference type="SUPFAM" id="SSF54995">
    <property type="entry name" value="Ribosomal protein S6"/>
    <property type="match status" value="1"/>
</dbReference>
<dbReference type="PROSITE" id="PS01048">
    <property type="entry name" value="RIBOSOMAL_S6"/>
    <property type="match status" value="1"/>
</dbReference>
<sequence>MRHYEIVFMVHPDQSEQVPGMIERYSAAITGAEGKIHRLEDWGRRQLAYPINKLHKAHYVLMNVEAPQEVIDELETTFRFNDAVIRSMVMRTKHAVTEASPMVKAKDERRERRDDFANETADDAEAGDSEE</sequence>
<accession>B5R0R8</accession>
<evidence type="ECO:0000255" key="1">
    <source>
        <dbReference type="HAMAP-Rule" id="MF_00360"/>
    </source>
</evidence>
<evidence type="ECO:0000256" key="2">
    <source>
        <dbReference type="SAM" id="MobiDB-lite"/>
    </source>
</evidence>
<evidence type="ECO:0000305" key="3"/>
<name>RS6_SALEP</name>
<comment type="function">
    <text evidence="1">Binds together with bS18 to 16S ribosomal RNA.</text>
</comment>
<comment type="similarity">
    <text evidence="1">Belongs to the bacterial ribosomal protein bS6 family.</text>
</comment>
<keyword id="KW-0687">Ribonucleoprotein</keyword>
<keyword id="KW-0689">Ribosomal protein</keyword>
<keyword id="KW-0694">RNA-binding</keyword>
<keyword id="KW-0699">rRNA-binding</keyword>
<feature type="chain" id="PRO_1000120798" description="Small ribosomal subunit protein bS6">
    <location>
        <begin position="1"/>
        <end position="131"/>
    </location>
</feature>
<feature type="region of interest" description="Disordered" evidence="2">
    <location>
        <begin position="98"/>
        <end position="131"/>
    </location>
</feature>
<feature type="compositionally biased region" description="Basic and acidic residues" evidence="2">
    <location>
        <begin position="104"/>
        <end position="116"/>
    </location>
</feature>
<feature type="compositionally biased region" description="Acidic residues" evidence="2">
    <location>
        <begin position="120"/>
        <end position="131"/>
    </location>
</feature>
<reference key="1">
    <citation type="journal article" date="2008" name="Genome Res.">
        <title>Comparative genome analysis of Salmonella enteritidis PT4 and Salmonella gallinarum 287/91 provides insights into evolutionary and host adaptation pathways.</title>
        <authorList>
            <person name="Thomson N.R."/>
            <person name="Clayton D.J."/>
            <person name="Windhorst D."/>
            <person name="Vernikos G."/>
            <person name="Davidson S."/>
            <person name="Churcher C."/>
            <person name="Quail M.A."/>
            <person name="Stevens M."/>
            <person name="Jones M.A."/>
            <person name="Watson M."/>
            <person name="Barron A."/>
            <person name="Layton A."/>
            <person name="Pickard D."/>
            <person name="Kingsley R.A."/>
            <person name="Bignell A."/>
            <person name="Clark L."/>
            <person name="Harris B."/>
            <person name="Ormond D."/>
            <person name="Abdellah Z."/>
            <person name="Brooks K."/>
            <person name="Cherevach I."/>
            <person name="Chillingworth T."/>
            <person name="Woodward J."/>
            <person name="Norberczak H."/>
            <person name="Lord A."/>
            <person name="Arrowsmith C."/>
            <person name="Jagels K."/>
            <person name="Moule S."/>
            <person name="Mungall K."/>
            <person name="Saunders M."/>
            <person name="Whitehead S."/>
            <person name="Chabalgoity J.A."/>
            <person name="Maskell D."/>
            <person name="Humphreys T."/>
            <person name="Roberts M."/>
            <person name="Barrow P.A."/>
            <person name="Dougan G."/>
            <person name="Parkhill J."/>
        </authorList>
    </citation>
    <scope>NUCLEOTIDE SEQUENCE [LARGE SCALE GENOMIC DNA]</scope>
    <source>
        <strain>P125109</strain>
    </source>
</reference>
<gene>
    <name evidence="1" type="primary">rpsF</name>
    <name type="ordered locus">SEN4157</name>
</gene>